<feature type="chain" id="PRO_0000419657" description="Dihydroceramide fatty acyl 2-hydroxylase FAH2">
    <location>
        <begin position="1"/>
        <end position="237"/>
    </location>
</feature>
<feature type="transmembrane region" description="Helical" evidence="2">
    <location>
        <begin position="54"/>
        <end position="74"/>
    </location>
</feature>
<feature type="transmembrane region" description="Helical" evidence="2">
    <location>
        <begin position="77"/>
        <end position="97"/>
    </location>
</feature>
<feature type="transmembrane region" description="Helical" evidence="2">
    <location>
        <begin position="134"/>
        <end position="154"/>
    </location>
</feature>
<feature type="transmembrane region" description="Helical" evidence="2">
    <location>
        <begin position="156"/>
        <end position="176"/>
    </location>
</feature>
<feature type="binding site" evidence="1">
    <location>
        <position position="102"/>
    </location>
    <ligand>
        <name>Zn(2+)</name>
        <dbReference type="ChEBI" id="CHEBI:29105"/>
        <label>1</label>
    </ligand>
</feature>
<feature type="binding site" evidence="1">
    <location>
        <position position="107"/>
    </location>
    <ligand>
        <name>Zn(2+)</name>
        <dbReference type="ChEBI" id="CHEBI:29105"/>
        <label>1</label>
    </ligand>
</feature>
<feature type="binding site" evidence="1">
    <location>
        <position position="123"/>
    </location>
    <ligand>
        <name>Zn(2+)</name>
        <dbReference type="ChEBI" id="CHEBI:29105"/>
        <label>1</label>
    </ligand>
</feature>
<feature type="binding site" evidence="1">
    <location>
        <position position="126"/>
    </location>
    <ligand>
        <name>Zn(2+)</name>
        <dbReference type="ChEBI" id="CHEBI:29105"/>
        <label>2</label>
    </ligand>
</feature>
<feature type="binding site" evidence="1">
    <location>
        <position position="127"/>
    </location>
    <ligand>
        <name>Zn(2+)</name>
        <dbReference type="ChEBI" id="CHEBI:29105"/>
        <label>1</label>
    </ligand>
</feature>
<feature type="binding site" evidence="1">
    <location>
        <position position="181"/>
    </location>
    <ligand>
        <name>Zn(2+)</name>
        <dbReference type="ChEBI" id="CHEBI:29105"/>
        <label>2</label>
    </ligand>
</feature>
<feature type="binding site" evidence="1">
    <location>
        <position position="185"/>
    </location>
    <ligand>
        <name>Zn(2+)</name>
        <dbReference type="ChEBI" id="CHEBI:29105"/>
        <label>2</label>
    </ligand>
</feature>
<feature type="binding site" evidence="1">
    <location>
        <position position="201"/>
    </location>
    <ligand>
        <name>Zn(2+)</name>
        <dbReference type="ChEBI" id="CHEBI:29105"/>
        <label>2</label>
    </ligand>
</feature>
<feature type="binding site" evidence="1">
    <location>
        <position position="204"/>
    </location>
    <ligand>
        <name>Zn(2+)</name>
        <dbReference type="ChEBI" id="CHEBI:29105"/>
        <label>1</label>
    </ligand>
</feature>
<feature type="binding site" evidence="1">
    <location>
        <position position="205"/>
    </location>
    <ligand>
        <name>Zn(2+)</name>
        <dbReference type="ChEBI" id="CHEBI:29105"/>
        <label>2</label>
    </ligand>
</feature>
<reference key="1">
    <citation type="journal article" date="1999" name="Nature">
        <title>Sequence and analysis of chromosome 4 of the plant Arabidopsis thaliana.</title>
        <authorList>
            <person name="Mayer K.F.X."/>
            <person name="Schueller C."/>
            <person name="Wambutt R."/>
            <person name="Murphy G."/>
            <person name="Volckaert G."/>
            <person name="Pohl T."/>
            <person name="Duesterhoeft A."/>
            <person name="Stiekema W."/>
            <person name="Entian K.-D."/>
            <person name="Terryn N."/>
            <person name="Harris B."/>
            <person name="Ansorge W."/>
            <person name="Brandt P."/>
            <person name="Grivell L.A."/>
            <person name="Rieger M."/>
            <person name="Weichselgartner M."/>
            <person name="de Simone V."/>
            <person name="Obermaier B."/>
            <person name="Mache R."/>
            <person name="Mueller M."/>
            <person name="Kreis M."/>
            <person name="Delseny M."/>
            <person name="Puigdomenech P."/>
            <person name="Watson M."/>
            <person name="Schmidtheini T."/>
            <person name="Reichert B."/>
            <person name="Portetelle D."/>
            <person name="Perez-Alonso M."/>
            <person name="Boutry M."/>
            <person name="Bancroft I."/>
            <person name="Vos P."/>
            <person name="Hoheisel J."/>
            <person name="Zimmermann W."/>
            <person name="Wedler H."/>
            <person name="Ridley P."/>
            <person name="Langham S.-A."/>
            <person name="McCullagh B."/>
            <person name="Bilham L."/>
            <person name="Robben J."/>
            <person name="van der Schueren J."/>
            <person name="Grymonprez B."/>
            <person name="Chuang Y.-J."/>
            <person name="Vandenbussche F."/>
            <person name="Braeken M."/>
            <person name="Weltjens I."/>
            <person name="Voet M."/>
            <person name="Bastiaens I."/>
            <person name="Aert R."/>
            <person name="Defoor E."/>
            <person name="Weitzenegger T."/>
            <person name="Bothe G."/>
            <person name="Ramsperger U."/>
            <person name="Hilbert H."/>
            <person name="Braun M."/>
            <person name="Holzer E."/>
            <person name="Brandt A."/>
            <person name="Peters S."/>
            <person name="van Staveren M."/>
            <person name="Dirkse W."/>
            <person name="Mooijman P."/>
            <person name="Klein Lankhorst R."/>
            <person name="Rose M."/>
            <person name="Hauf J."/>
            <person name="Koetter P."/>
            <person name="Berneiser S."/>
            <person name="Hempel S."/>
            <person name="Feldpausch M."/>
            <person name="Lamberth S."/>
            <person name="Van den Daele H."/>
            <person name="De Keyser A."/>
            <person name="Buysshaert C."/>
            <person name="Gielen J."/>
            <person name="Villarroel R."/>
            <person name="De Clercq R."/>
            <person name="van Montagu M."/>
            <person name="Rogers J."/>
            <person name="Cronin A."/>
            <person name="Quail M.A."/>
            <person name="Bray-Allen S."/>
            <person name="Clark L."/>
            <person name="Doggett J."/>
            <person name="Hall S."/>
            <person name="Kay M."/>
            <person name="Lennard N."/>
            <person name="McLay K."/>
            <person name="Mayes R."/>
            <person name="Pettett A."/>
            <person name="Rajandream M.A."/>
            <person name="Lyne M."/>
            <person name="Benes V."/>
            <person name="Rechmann S."/>
            <person name="Borkova D."/>
            <person name="Bloecker H."/>
            <person name="Scharfe M."/>
            <person name="Grimm M."/>
            <person name="Loehnert T.-H."/>
            <person name="Dose S."/>
            <person name="de Haan M."/>
            <person name="Maarse A.C."/>
            <person name="Schaefer M."/>
            <person name="Mueller-Auer S."/>
            <person name="Gabel C."/>
            <person name="Fuchs M."/>
            <person name="Fartmann B."/>
            <person name="Granderath K."/>
            <person name="Dauner D."/>
            <person name="Herzl A."/>
            <person name="Neumann S."/>
            <person name="Argiriou A."/>
            <person name="Vitale D."/>
            <person name="Liguori R."/>
            <person name="Piravandi E."/>
            <person name="Massenet O."/>
            <person name="Quigley F."/>
            <person name="Clabauld G."/>
            <person name="Muendlein A."/>
            <person name="Felber R."/>
            <person name="Schnabl S."/>
            <person name="Hiller R."/>
            <person name="Schmidt W."/>
            <person name="Lecharny A."/>
            <person name="Aubourg S."/>
            <person name="Chefdor F."/>
            <person name="Cooke R."/>
            <person name="Berger C."/>
            <person name="Monfort A."/>
            <person name="Casacuberta E."/>
            <person name="Gibbons T."/>
            <person name="Weber N."/>
            <person name="Vandenbol M."/>
            <person name="Bargues M."/>
            <person name="Terol J."/>
            <person name="Torres A."/>
            <person name="Perez-Perez A."/>
            <person name="Purnelle B."/>
            <person name="Bent E."/>
            <person name="Johnson S."/>
            <person name="Tacon D."/>
            <person name="Jesse T."/>
            <person name="Heijnen L."/>
            <person name="Schwarz S."/>
            <person name="Scholler P."/>
            <person name="Heber S."/>
            <person name="Francs P."/>
            <person name="Bielke C."/>
            <person name="Frishman D."/>
            <person name="Haase D."/>
            <person name="Lemcke K."/>
            <person name="Mewes H.-W."/>
            <person name="Stocker S."/>
            <person name="Zaccaria P."/>
            <person name="Bevan M."/>
            <person name="Wilson R.K."/>
            <person name="de la Bastide M."/>
            <person name="Habermann K."/>
            <person name="Parnell L."/>
            <person name="Dedhia N."/>
            <person name="Gnoj L."/>
            <person name="Schutz K."/>
            <person name="Huang E."/>
            <person name="Spiegel L."/>
            <person name="Sekhon M."/>
            <person name="Murray J."/>
            <person name="Sheet P."/>
            <person name="Cordes M."/>
            <person name="Abu-Threideh J."/>
            <person name="Stoneking T."/>
            <person name="Kalicki J."/>
            <person name="Graves T."/>
            <person name="Harmon G."/>
            <person name="Edwards J."/>
            <person name="Latreille P."/>
            <person name="Courtney L."/>
            <person name="Cloud J."/>
            <person name="Abbott A."/>
            <person name="Scott K."/>
            <person name="Johnson D."/>
            <person name="Minx P."/>
            <person name="Bentley D."/>
            <person name="Fulton B."/>
            <person name="Miller N."/>
            <person name="Greco T."/>
            <person name="Kemp K."/>
            <person name="Kramer J."/>
            <person name="Fulton L."/>
            <person name="Mardis E."/>
            <person name="Dante M."/>
            <person name="Pepin K."/>
            <person name="Hillier L.W."/>
            <person name="Nelson J."/>
            <person name="Spieth J."/>
            <person name="Ryan E."/>
            <person name="Andrews S."/>
            <person name="Geisel C."/>
            <person name="Layman D."/>
            <person name="Du H."/>
            <person name="Ali J."/>
            <person name="Berghoff A."/>
            <person name="Jones K."/>
            <person name="Drone K."/>
            <person name="Cotton M."/>
            <person name="Joshu C."/>
            <person name="Antonoiu B."/>
            <person name="Zidanic M."/>
            <person name="Strong C."/>
            <person name="Sun H."/>
            <person name="Lamar B."/>
            <person name="Yordan C."/>
            <person name="Ma P."/>
            <person name="Zhong J."/>
            <person name="Preston R."/>
            <person name="Vil D."/>
            <person name="Shekher M."/>
            <person name="Matero A."/>
            <person name="Shah R."/>
            <person name="Swaby I.K."/>
            <person name="O'Shaughnessy A."/>
            <person name="Rodriguez M."/>
            <person name="Hoffman J."/>
            <person name="Till S."/>
            <person name="Granat S."/>
            <person name="Shohdy N."/>
            <person name="Hasegawa A."/>
            <person name="Hameed A."/>
            <person name="Lodhi M."/>
            <person name="Johnson A."/>
            <person name="Chen E."/>
            <person name="Marra M.A."/>
            <person name="Martienssen R."/>
            <person name="McCombie W.R."/>
        </authorList>
    </citation>
    <scope>NUCLEOTIDE SEQUENCE [LARGE SCALE GENOMIC DNA]</scope>
    <source>
        <strain>cv. Columbia</strain>
    </source>
</reference>
<reference key="2">
    <citation type="journal article" date="2017" name="Plant J.">
        <title>Araport11: a complete reannotation of the Arabidopsis thaliana reference genome.</title>
        <authorList>
            <person name="Cheng C.Y."/>
            <person name="Krishnakumar V."/>
            <person name="Chan A.P."/>
            <person name="Thibaud-Nissen F."/>
            <person name="Schobel S."/>
            <person name="Town C.D."/>
        </authorList>
    </citation>
    <scope>GENOME REANNOTATION</scope>
    <source>
        <strain>cv. Columbia</strain>
    </source>
</reference>
<reference key="3">
    <citation type="journal article" date="2003" name="Science">
        <title>Empirical analysis of transcriptional activity in the Arabidopsis genome.</title>
        <authorList>
            <person name="Yamada K."/>
            <person name="Lim J."/>
            <person name="Dale J.M."/>
            <person name="Chen H."/>
            <person name="Shinn P."/>
            <person name="Palm C.J."/>
            <person name="Southwick A.M."/>
            <person name="Wu H.C."/>
            <person name="Kim C.J."/>
            <person name="Nguyen M."/>
            <person name="Pham P.K."/>
            <person name="Cheuk R.F."/>
            <person name="Karlin-Newmann G."/>
            <person name="Liu S.X."/>
            <person name="Lam B."/>
            <person name="Sakano H."/>
            <person name="Wu T."/>
            <person name="Yu G."/>
            <person name="Miranda M."/>
            <person name="Quach H.L."/>
            <person name="Tripp M."/>
            <person name="Chang C.H."/>
            <person name="Lee J.M."/>
            <person name="Toriumi M.J."/>
            <person name="Chan M.M."/>
            <person name="Tang C.C."/>
            <person name="Onodera C.S."/>
            <person name="Deng J.M."/>
            <person name="Akiyama K."/>
            <person name="Ansari Y."/>
            <person name="Arakawa T."/>
            <person name="Banh J."/>
            <person name="Banno F."/>
            <person name="Bowser L."/>
            <person name="Brooks S.Y."/>
            <person name="Carninci P."/>
            <person name="Chao Q."/>
            <person name="Choy N."/>
            <person name="Enju A."/>
            <person name="Goldsmith A.D."/>
            <person name="Gurjal M."/>
            <person name="Hansen N.F."/>
            <person name="Hayashizaki Y."/>
            <person name="Johnson-Hopson C."/>
            <person name="Hsuan V.W."/>
            <person name="Iida K."/>
            <person name="Karnes M."/>
            <person name="Khan S."/>
            <person name="Koesema E."/>
            <person name="Ishida J."/>
            <person name="Jiang P.X."/>
            <person name="Jones T."/>
            <person name="Kawai J."/>
            <person name="Kamiya A."/>
            <person name="Meyers C."/>
            <person name="Nakajima M."/>
            <person name="Narusaka M."/>
            <person name="Seki M."/>
            <person name="Sakurai T."/>
            <person name="Satou M."/>
            <person name="Tamse R."/>
            <person name="Vaysberg M."/>
            <person name="Wallender E.K."/>
            <person name="Wong C."/>
            <person name="Yamamura Y."/>
            <person name="Yuan S."/>
            <person name="Shinozaki K."/>
            <person name="Davis R.W."/>
            <person name="Theologis A."/>
            <person name="Ecker J.R."/>
        </authorList>
    </citation>
    <scope>NUCLEOTIDE SEQUENCE [LARGE SCALE MRNA]</scope>
    <source>
        <strain>cv. Columbia</strain>
    </source>
</reference>
<reference key="4">
    <citation type="journal article" date="2009" name="Plant J.">
        <title>Functional association of cell death suppressor, Arabidopsis Bax inhibitor-1, with fatty acid 2-hydroxylation through cytochrome b(5).</title>
        <authorList>
            <person name="Nagano M."/>
            <person name="Ihara-Ohori Y."/>
            <person name="Imai H."/>
            <person name="Inada N."/>
            <person name="Fujimoto M."/>
            <person name="Tsutsumi N."/>
            <person name="Uchimiya H."/>
            <person name="Kawai-Yamada M."/>
        </authorList>
    </citation>
    <scope>FUNCTION</scope>
    <scope>SUBCELLULAR LOCATION</scope>
    <scope>INTERACTION WITH CYTB5-A; CYTB5-B; CYTB5-C AND CYTB5-D</scope>
</reference>
<reference key="5">
    <citation type="journal article" date="2012" name="Plant Physiol.">
        <title>Arabidopsis sphingolipid fatty acid 2-hydroxylases (AtFAH1 and AtFAH2) are functionally differentiated in fatty acid 2-hydroxylation and stress responses.</title>
        <authorList>
            <person name="Nagano M."/>
            <person name="Takahara K."/>
            <person name="Fujimoto M."/>
            <person name="Tsutsumi N."/>
            <person name="Uchimiya H."/>
            <person name="Kawai-Yamada M."/>
        </authorList>
    </citation>
    <scope>FUNCTION</scope>
    <scope>CATALYTIC ACTIVITY</scope>
    <scope>DISRUPTION PHENOTYPE</scope>
    <scope>INDUCTION BY H(2)O(2)</scope>
    <source>
        <strain>cv. Columbia</strain>
    </source>
</reference>
<reference key="6">
    <citation type="journal article" date="2012" name="Plant Signal. Behav.">
        <title>Plant sphingolipid fatty acid 2-hydroxylases have unique characters unlike their animal and fungus counterparts.</title>
        <authorList>
            <person name="Nagano M."/>
            <person name="Uchimiya H."/>
            <person name="Kawai-Yamada M."/>
        </authorList>
    </citation>
    <scope>TISSUE SPECIFICITY</scope>
</reference>
<protein>
    <recommendedName>
        <fullName evidence="7">Dihydroceramide fatty acyl 2-hydroxylase FAH2</fullName>
        <ecNumber evidence="4">1.14.18.7</ecNumber>
    </recommendedName>
    <alternativeName>
        <fullName evidence="6">Fatty acid 2-hydroxylase 2</fullName>
        <shortName evidence="6">AtFAH2</shortName>
    </alternativeName>
</protein>
<dbReference type="EC" id="1.14.18.7" evidence="4"/>
<dbReference type="EMBL" id="AL080282">
    <property type="protein sequence ID" value="CAB45882.1"/>
    <property type="molecule type" value="Genomic_DNA"/>
</dbReference>
<dbReference type="EMBL" id="AL161553">
    <property type="protein sequence ID" value="CAB79087.1"/>
    <property type="molecule type" value="Genomic_DNA"/>
</dbReference>
<dbReference type="EMBL" id="CP002687">
    <property type="protein sequence ID" value="AEE84370.1"/>
    <property type="molecule type" value="Genomic_DNA"/>
</dbReference>
<dbReference type="EMBL" id="CP002687">
    <property type="protein sequence ID" value="ANM67123.1"/>
    <property type="molecule type" value="Genomic_DNA"/>
</dbReference>
<dbReference type="EMBL" id="AY044315">
    <property type="protein sequence ID" value="AAK73256.1"/>
    <property type="molecule type" value="mRNA"/>
</dbReference>
<dbReference type="EMBL" id="AY058151">
    <property type="protein sequence ID" value="AAL25567.1"/>
    <property type="molecule type" value="mRNA"/>
</dbReference>
<dbReference type="EMBL" id="AY101538">
    <property type="protein sequence ID" value="AAM26659.1"/>
    <property type="molecule type" value="mRNA"/>
</dbReference>
<dbReference type="PIR" id="T10629">
    <property type="entry name" value="T10629"/>
</dbReference>
<dbReference type="RefSeq" id="NP_001328972.1">
    <property type="nucleotide sequence ID" value="NM_001341459.1"/>
</dbReference>
<dbReference type="RefSeq" id="NP_193819.1">
    <property type="nucleotide sequence ID" value="NM_118205.2"/>
</dbReference>
<dbReference type="SMR" id="Q9SUC5"/>
<dbReference type="BioGRID" id="13126">
    <property type="interactions" value="1"/>
</dbReference>
<dbReference type="FunCoup" id="Q9SUC5">
    <property type="interactions" value="415"/>
</dbReference>
<dbReference type="IntAct" id="Q9SUC5">
    <property type="interactions" value="1"/>
</dbReference>
<dbReference type="STRING" id="3702.Q9SUC5"/>
<dbReference type="PaxDb" id="3702-AT4G20870.1"/>
<dbReference type="ProteomicsDB" id="230955"/>
<dbReference type="DNASU" id="827835"/>
<dbReference type="EnsemblPlants" id="AT4G20870.1">
    <property type="protein sequence ID" value="AT4G20870.1"/>
    <property type="gene ID" value="AT4G20870"/>
</dbReference>
<dbReference type="EnsemblPlants" id="AT4G20870.2">
    <property type="protein sequence ID" value="AT4G20870.2"/>
    <property type="gene ID" value="AT4G20870"/>
</dbReference>
<dbReference type="GeneID" id="827835"/>
<dbReference type="Gramene" id="AT4G20870.1">
    <property type="protein sequence ID" value="AT4G20870.1"/>
    <property type="gene ID" value="AT4G20870"/>
</dbReference>
<dbReference type="Gramene" id="AT4G20870.2">
    <property type="protein sequence ID" value="AT4G20870.2"/>
    <property type="gene ID" value="AT4G20870"/>
</dbReference>
<dbReference type="KEGG" id="ath:AT4G20870"/>
<dbReference type="Araport" id="AT4G20870"/>
<dbReference type="TAIR" id="AT4G20870">
    <property type="gene designation" value="FAH2"/>
</dbReference>
<dbReference type="eggNOG" id="KOG0539">
    <property type="taxonomic scope" value="Eukaryota"/>
</dbReference>
<dbReference type="HOGENOM" id="CLU_034756_1_0_1"/>
<dbReference type="InParanoid" id="Q9SUC5"/>
<dbReference type="OMA" id="HDYPNDA"/>
<dbReference type="PhylomeDB" id="Q9SUC5"/>
<dbReference type="BioCyc" id="ARA:AT4G20870-MONOMER"/>
<dbReference type="BRENDA" id="1.14.18.7">
    <property type="organism ID" value="399"/>
</dbReference>
<dbReference type="PRO" id="PR:Q9SUC5"/>
<dbReference type="Proteomes" id="UP000006548">
    <property type="component" value="Chromosome 4"/>
</dbReference>
<dbReference type="ExpressionAtlas" id="Q9SUC5">
    <property type="expression patterns" value="baseline and differential"/>
</dbReference>
<dbReference type="GO" id="GO:0005783">
    <property type="term" value="C:endoplasmic reticulum"/>
    <property type="evidence" value="ECO:0000314"/>
    <property type="project" value="TAIR"/>
</dbReference>
<dbReference type="GO" id="GO:0005789">
    <property type="term" value="C:endoplasmic reticulum membrane"/>
    <property type="evidence" value="ECO:0007669"/>
    <property type="project" value="UniProtKB-SubCell"/>
</dbReference>
<dbReference type="GO" id="GO:0102771">
    <property type="term" value="F:dihydroceramide fatty acyl 2-hydroxylase activity"/>
    <property type="evidence" value="ECO:0007669"/>
    <property type="project" value="UniProtKB-EC"/>
</dbReference>
<dbReference type="GO" id="GO:0005506">
    <property type="term" value="F:iron ion binding"/>
    <property type="evidence" value="ECO:0007669"/>
    <property type="project" value="InterPro"/>
</dbReference>
<dbReference type="GO" id="GO:0006633">
    <property type="term" value="P:fatty acid biosynthetic process"/>
    <property type="evidence" value="ECO:0007669"/>
    <property type="project" value="UniProtKB-KW"/>
</dbReference>
<dbReference type="InterPro" id="IPR006694">
    <property type="entry name" value="Fatty_acid_hydroxylase"/>
</dbReference>
<dbReference type="InterPro" id="IPR014430">
    <property type="entry name" value="Scs7"/>
</dbReference>
<dbReference type="PANTHER" id="PTHR12863:SF13">
    <property type="entry name" value="DIHYDROCERAMIDE FATTY ACYL 2-HYDROXYLASE FAH2"/>
    <property type="match status" value="1"/>
</dbReference>
<dbReference type="PANTHER" id="PTHR12863">
    <property type="entry name" value="FATTY ACID HYDROXYLASE"/>
    <property type="match status" value="1"/>
</dbReference>
<dbReference type="Pfam" id="PF04116">
    <property type="entry name" value="FA_hydroxylase"/>
    <property type="match status" value="1"/>
</dbReference>
<comment type="function">
    <text evidence="3 4">Fatty acid 2-hydroxylase involved in the alpha-hydroxylation of the long-chain fatty acid (LCFA) palmitic acid. Probably involved in the resistance response to oxidative stress.</text>
</comment>
<comment type="catalytic activity">
    <reaction evidence="4">
        <text>an N-(1,2-saturated acyl)sphinganine + 2 Fe(II)-[cytochrome b5] + O2 + 2 H(+) = an N-[(2'R)-hydroxyacyl]sphinganine + 2 Fe(III)-[cytochrome b5] + H2O</text>
        <dbReference type="Rhea" id="RHEA:46512"/>
        <dbReference type="Rhea" id="RHEA-COMP:10438"/>
        <dbReference type="Rhea" id="RHEA-COMP:10439"/>
        <dbReference type="ChEBI" id="CHEBI:15377"/>
        <dbReference type="ChEBI" id="CHEBI:15378"/>
        <dbReference type="ChEBI" id="CHEBI:15379"/>
        <dbReference type="ChEBI" id="CHEBI:29033"/>
        <dbReference type="ChEBI" id="CHEBI:29034"/>
        <dbReference type="ChEBI" id="CHEBI:86265"/>
        <dbReference type="ChEBI" id="CHEBI:86266"/>
        <dbReference type="EC" id="1.14.18.7"/>
    </reaction>
</comment>
<comment type="cofactor">
    <cofactor evidence="1">
        <name>Zn(2+)</name>
        <dbReference type="ChEBI" id="CHEBI:29105"/>
    </cofactor>
    <text evidence="1">Binds 2 Zn(2+) ions per subunit that likely form a catalytic dimetal center.</text>
</comment>
<comment type="subunit">
    <text evidence="3">Interacts with CYTB5-A, CYTB5-B, CYTB5-C and CYTB5-D.</text>
</comment>
<comment type="subcellular location">
    <subcellularLocation>
        <location evidence="3">Endoplasmic reticulum membrane</location>
        <topology evidence="3">Multi-pass membrane protein</topology>
    </subcellularLocation>
</comment>
<comment type="tissue specificity">
    <text evidence="5">Expressed in leaves, roots, flowers and seeds.</text>
</comment>
<comment type="induction">
    <text evidence="4">Not induced by H(2)O(2) treatment.</text>
</comment>
<comment type="disruption phenotype">
    <text evidence="4">No visible phenotype under normal growth conditions.</text>
</comment>
<comment type="similarity">
    <text evidence="7">Belongs to the sterol desaturase family.</text>
</comment>
<evidence type="ECO:0000250" key="1">
    <source>
        <dbReference type="UniProtKB" id="Q03529"/>
    </source>
</evidence>
<evidence type="ECO:0000255" key="2"/>
<evidence type="ECO:0000269" key="3">
    <source>
    </source>
</evidence>
<evidence type="ECO:0000269" key="4">
    <source>
    </source>
</evidence>
<evidence type="ECO:0000269" key="5">
    <source>
    </source>
</evidence>
<evidence type="ECO:0000303" key="6">
    <source>
    </source>
</evidence>
<evidence type="ECO:0000305" key="7"/>
<evidence type="ECO:0000312" key="8">
    <source>
        <dbReference type="Araport" id="AT4G20870"/>
    </source>
</evidence>
<evidence type="ECO:0000312" key="9">
    <source>
        <dbReference type="EMBL" id="CAB45882.1"/>
    </source>
</evidence>
<accession>Q9SUC5</accession>
<sequence length="237" mass="27311">MVAERYTVDLNKPLVFQVGHLGEEYQEWIHQPIVCVEGPRFFESDFWEFLTRTVWWAIPTIWLPVVCYVLSISASKGLTFPQIGLIVAFGVLTWTLLEYTLHRFLFHIQTKSYWANTAHYLLHGCHHKHPQDGLRLVFPPTATAILLVPLWKLLHLLATPATAPAILGGILFGYVMYDITHYYLHHGQPKEPTFKHLKKYHLNHHFRIQDKGYGITSSLWDKVFGTLPGIKAAAKKS</sequence>
<keyword id="KW-0256">Endoplasmic reticulum</keyword>
<keyword id="KW-0275">Fatty acid biosynthesis</keyword>
<keyword id="KW-0276">Fatty acid metabolism</keyword>
<keyword id="KW-0444">Lipid biosynthesis</keyword>
<keyword id="KW-0443">Lipid metabolism</keyword>
<keyword id="KW-0472">Membrane</keyword>
<keyword id="KW-0479">Metal-binding</keyword>
<keyword id="KW-0560">Oxidoreductase</keyword>
<keyword id="KW-1185">Reference proteome</keyword>
<keyword id="KW-0812">Transmembrane</keyword>
<keyword id="KW-1133">Transmembrane helix</keyword>
<keyword id="KW-0862">Zinc</keyword>
<proteinExistence type="evidence at protein level"/>
<name>FAH2_ARATH</name>
<organism>
    <name type="scientific">Arabidopsis thaliana</name>
    <name type="common">Mouse-ear cress</name>
    <dbReference type="NCBI Taxonomy" id="3702"/>
    <lineage>
        <taxon>Eukaryota</taxon>
        <taxon>Viridiplantae</taxon>
        <taxon>Streptophyta</taxon>
        <taxon>Embryophyta</taxon>
        <taxon>Tracheophyta</taxon>
        <taxon>Spermatophyta</taxon>
        <taxon>Magnoliopsida</taxon>
        <taxon>eudicotyledons</taxon>
        <taxon>Gunneridae</taxon>
        <taxon>Pentapetalae</taxon>
        <taxon>rosids</taxon>
        <taxon>malvids</taxon>
        <taxon>Brassicales</taxon>
        <taxon>Brassicaceae</taxon>
        <taxon>Camelineae</taxon>
        <taxon>Arabidopsis</taxon>
    </lineage>
</organism>
<gene>
    <name evidence="6" type="primary">FAH2</name>
    <name evidence="8" type="ordered locus">At4g20870</name>
    <name evidence="9" type="ORF">T13K14.30</name>
</gene>